<keyword id="KW-0072">Autophagy</keyword>
<keyword id="KW-0175">Coiled coil</keyword>
<keyword id="KW-0963">Cytoplasm</keyword>
<keyword id="KW-0968">Cytoplasmic vesicle</keyword>
<keyword id="KW-0206">Cytoskeleton</keyword>
<keyword id="KW-0472">Membrane</keyword>
<keyword id="KW-0479">Metal-binding</keyword>
<keyword id="KW-1185">Reference proteome</keyword>
<keyword id="KW-0862">Zinc</keyword>
<keyword id="KW-0863">Zinc-finger</keyword>
<name>CACO2_BOVIN</name>
<comment type="function">
    <text evidence="1">Xenophagy-specific receptor required for autophagy-mediated intracellular bacteria degradation (By similarity). Acts as an effector protein of galectin-sensed membrane damage that restricts the proliferation of infecting pathogens upon entry into the cytosol by targeting LGALS8-associated bacteria for autophagy (By similarity). Initially orchestrates bacteria targeting to autophagosomes and subsequently ensures pathogen degradation by regulating pathogen-containing autophagosome maturation (By similarity). Bacteria targeting to autophagosomes relies on its interaction with MAP1LC3A, MAP1LC3B and/or GABARAPL2, whereas regulation of pathogen-containing autophagosome maturation requires the interaction with MAP3LC3C (By similarity). May play a role in ruffle formation and actin cytoskeleton organization and seems to negatively regulate constitutive secretion (By similarity).</text>
</comment>
<comment type="subunit">
    <text evidence="1">Dimer. Part of a complex consisting of CALCOCO2, TAX1BP1 and MYO6. Interacts with GEMIN4. Interacts with ATG8 family members MAP1LC3A, MAP1LC3B, GABARAP, GABARAPL1 and GABARAPL2. Interacts with ATG8 family member MAP1LC3C. Interacts with LGALS8. Interacts with TOM1; the interaction is indirect and is mediated by MYO6, which acts as a bridge between TOM1 and CALCOCO2 (By similarity). Interacts with AZI2 (By similarity).</text>
</comment>
<comment type="subcellular location">
    <subcellularLocation>
        <location evidence="1">Cytoplasm</location>
        <location evidence="1">Perinuclear region</location>
    </subcellularLocation>
    <subcellularLocation>
        <location evidence="1">Cytoplasm</location>
        <location evidence="1">Cytoskeleton</location>
    </subcellularLocation>
    <subcellularLocation>
        <location evidence="1">Cytoplasmic vesicle</location>
        <location evidence="1">Autophagosome membrane</location>
        <topology evidence="4">Peripheral membrane protein</topology>
    </subcellularLocation>
</comment>
<comment type="domain">
    <text evidence="1">The MYO6-binding domain is required for autophagy-mediated degradation of infecting bacteria such as Salmonella typhimurium, but not for bacteria targeting to autophagosomes.</text>
</comment>
<comment type="domain">
    <text evidence="1">The LGALS8-binding domain is essential for the recruitment to cytosol-exposed infecting bacteria.</text>
</comment>
<comment type="domain">
    <text evidence="1">The CLIR (LC3C-interacting region) motif is required for interaction with MAP1LC3C, but dispensable for CALCOCO2-mediated autophagosome maturation.</text>
</comment>
<comment type="domain">
    <text evidence="1">The LIR-like motif is required for interaction with MAP1LC3A, MAP1LC3B and GABARAPL2, as well as for CALCOCO2-mediated autophagosome maturation.</text>
</comment>
<comment type="similarity">
    <text evidence="4">Belongs to the CALCOCO family.</text>
</comment>
<proteinExistence type="evidence at transcript level"/>
<feature type="chain" id="PRO_0000312336" description="Calcium-binding and coiled-coil domain-containing protein 2">
    <location>
        <begin position="1"/>
        <end position="450"/>
    </location>
</feature>
<feature type="zinc finger region" description="UBZ1-type" evidence="3">
    <location>
        <begin position="423"/>
        <end position="448"/>
    </location>
</feature>
<feature type="region of interest" description="Interaction with LGALS8" evidence="1">
    <location>
        <begin position="371"/>
        <end position="381"/>
    </location>
</feature>
<feature type="region of interest" description="Interaction with MYO6" evidence="1">
    <location>
        <begin position="395"/>
        <end position="450"/>
    </location>
</feature>
<feature type="coiled-coil region" evidence="2">
    <location>
        <begin position="135"/>
        <end position="349"/>
    </location>
</feature>
<feature type="short sequence motif" description="CLIR" evidence="1">
    <location>
        <begin position="133"/>
        <end position="136"/>
    </location>
</feature>
<feature type="short sequence motif" description="LIR-like" evidence="1">
    <location>
        <begin position="203"/>
        <end position="206"/>
    </location>
</feature>
<feature type="binding site" evidence="3">
    <location>
        <position position="426"/>
    </location>
    <ligand>
        <name>Zn(2+)</name>
        <dbReference type="ChEBI" id="CHEBI:29105"/>
    </ligand>
</feature>
<feature type="binding site" evidence="3">
    <location>
        <position position="429"/>
    </location>
    <ligand>
        <name>Zn(2+)</name>
        <dbReference type="ChEBI" id="CHEBI:29105"/>
    </ligand>
</feature>
<feature type="binding site" evidence="3">
    <location>
        <position position="444"/>
    </location>
    <ligand>
        <name>Zn(2+)</name>
        <dbReference type="ChEBI" id="CHEBI:29105"/>
    </ligand>
</feature>
<feature type="binding site" evidence="3">
    <location>
        <position position="448"/>
    </location>
    <ligand>
        <name>Zn(2+)</name>
        <dbReference type="ChEBI" id="CHEBI:29105"/>
    </ligand>
</feature>
<evidence type="ECO:0000250" key="1">
    <source>
        <dbReference type="UniProtKB" id="Q13137"/>
    </source>
</evidence>
<evidence type="ECO:0000255" key="2"/>
<evidence type="ECO:0000255" key="3">
    <source>
        <dbReference type="PROSITE-ProRule" id="PRU01253"/>
    </source>
</evidence>
<evidence type="ECO:0000305" key="4"/>
<reference key="1">
    <citation type="submission" date="1997-11" db="EMBL/GenBank/DDBJ databases">
        <title>Bovine NDP52.</title>
        <authorList>
            <person name="Ishiguro N."/>
        </authorList>
    </citation>
    <scope>NUCLEOTIDE SEQUENCE [MRNA]</scope>
</reference>
<reference key="2">
    <citation type="submission" date="2007-06" db="EMBL/GenBank/DDBJ databases">
        <authorList>
            <consortium name="NIH - Mammalian Gene Collection (MGC) project"/>
        </authorList>
    </citation>
    <scope>NUCLEOTIDE SEQUENCE [LARGE SCALE MRNA]</scope>
    <source>
        <strain>Hereford</strain>
        <tissue>Ascending colon</tissue>
    </source>
</reference>
<dbReference type="EMBL" id="AB008852">
    <property type="protein sequence ID" value="BAA23587.1"/>
    <property type="molecule type" value="mRNA"/>
</dbReference>
<dbReference type="EMBL" id="BC146237">
    <property type="protein sequence ID" value="AAI46238.1"/>
    <property type="molecule type" value="mRNA"/>
</dbReference>
<dbReference type="RefSeq" id="NP_776825.1">
    <property type="nucleotide sequence ID" value="NM_174400.2"/>
</dbReference>
<dbReference type="RefSeq" id="XP_005220542.4">
    <property type="nucleotide sequence ID" value="XM_005220485.5"/>
</dbReference>
<dbReference type="SMR" id="O18737"/>
<dbReference type="FunCoup" id="O18737">
    <property type="interactions" value="762"/>
</dbReference>
<dbReference type="STRING" id="9913.ENSBTAP00000010432"/>
<dbReference type="PaxDb" id="9913-ENSBTAP00000010432"/>
<dbReference type="GeneID" id="281942"/>
<dbReference type="KEGG" id="bta:281942"/>
<dbReference type="CTD" id="10241"/>
<dbReference type="eggNOG" id="ENOG502QT1M">
    <property type="taxonomic scope" value="Eukaryota"/>
</dbReference>
<dbReference type="HOGENOM" id="CLU_021315_0_0_1"/>
<dbReference type="InParanoid" id="O18737"/>
<dbReference type="OrthoDB" id="10015001at2759"/>
<dbReference type="TreeFam" id="TF329501"/>
<dbReference type="Proteomes" id="UP000009136">
    <property type="component" value="Unplaced"/>
</dbReference>
<dbReference type="GO" id="GO:0005776">
    <property type="term" value="C:autophagosome"/>
    <property type="evidence" value="ECO:0000250"/>
    <property type="project" value="GO_Central"/>
</dbReference>
<dbReference type="GO" id="GO:0000421">
    <property type="term" value="C:autophagosome membrane"/>
    <property type="evidence" value="ECO:0007669"/>
    <property type="project" value="UniProtKB-SubCell"/>
</dbReference>
<dbReference type="GO" id="GO:0031410">
    <property type="term" value="C:cytoplasmic vesicle"/>
    <property type="evidence" value="ECO:0007669"/>
    <property type="project" value="UniProtKB-KW"/>
</dbReference>
<dbReference type="GO" id="GO:0005856">
    <property type="term" value="C:cytoskeleton"/>
    <property type="evidence" value="ECO:0007669"/>
    <property type="project" value="UniProtKB-SubCell"/>
</dbReference>
<dbReference type="GO" id="GO:0048471">
    <property type="term" value="C:perinuclear region of cytoplasm"/>
    <property type="evidence" value="ECO:0007669"/>
    <property type="project" value="UniProtKB-SubCell"/>
</dbReference>
<dbReference type="GO" id="GO:0016605">
    <property type="term" value="C:PML body"/>
    <property type="evidence" value="ECO:0000318"/>
    <property type="project" value="GO_Central"/>
</dbReference>
<dbReference type="GO" id="GO:0008270">
    <property type="term" value="F:zinc ion binding"/>
    <property type="evidence" value="ECO:0007669"/>
    <property type="project" value="UniProtKB-KW"/>
</dbReference>
<dbReference type="GO" id="GO:1901098">
    <property type="term" value="P:positive regulation of autophagosome maturation"/>
    <property type="evidence" value="ECO:0000250"/>
    <property type="project" value="GO_Central"/>
</dbReference>
<dbReference type="GO" id="GO:0098792">
    <property type="term" value="P:xenophagy"/>
    <property type="evidence" value="ECO:0000250"/>
    <property type="project" value="GO_Central"/>
</dbReference>
<dbReference type="CDD" id="cd21968">
    <property type="entry name" value="Zn-C2H2_CALCOCO2"/>
    <property type="match status" value="1"/>
</dbReference>
<dbReference type="FunFam" id="2.60.40.2840:FF:000002">
    <property type="entry name" value="Tax1-binding protein 1 isoform 2"/>
    <property type="match status" value="1"/>
</dbReference>
<dbReference type="Gene3D" id="2.60.40.2840">
    <property type="match status" value="1"/>
</dbReference>
<dbReference type="Gene3D" id="6.20.250.40">
    <property type="match status" value="1"/>
</dbReference>
<dbReference type="InterPro" id="IPR041641">
    <property type="entry name" value="CALCOCO1/2_Zn_UBZ1"/>
</dbReference>
<dbReference type="InterPro" id="IPR041611">
    <property type="entry name" value="SKICH"/>
</dbReference>
<dbReference type="InterPro" id="IPR051002">
    <property type="entry name" value="UBA_autophagy_assoc_protein"/>
</dbReference>
<dbReference type="PANTHER" id="PTHR31915:SF4">
    <property type="entry name" value="CALCIUM-BINDING AND COILED-COIL DOMAIN-CONTAINING PROTEIN 2"/>
    <property type="match status" value="1"/>
</dbReference>
<dbReference type="PANTHER" id="PTHR31915">
    <property type="entry name" value="SKICH DOMAIN-CONTAINING PROTEIN"/>
    <property type="match status" value="1"/>
</dbReference>
<dbReference type="Pfam" id="PF17751">
    <property type="entry name" value="SKICH"/>
    <property type="match status" value="1"/>
</dbReference>
<dbReference type="PROSITE" id="PS51905">
    <property type="entry name" value="ZF_UBZ1"/>
    <property type="match status" value="1"/>
</dbReference>
<accession>O18737</accession>
<sequence>MEETVDDPPTSAVLLDHCHFSQVIFNSVEKFYIPGGDITCYYTLTQHFIPRRKDWIGIFRVGWKTTREYYTFMWVTLPVDLNSESAKQQEVQFKAYYLPKDDEYYQFCYVDQDGVVRGASIPFQFRPENEEDILVVTTQSEVEEIEQHNKELCKENRELKDSCVSLQKQNSDMQATLQKKQEELETLKSINKKLEQTMKEQKDCWEIELLQLKEQNQKMSSENEKMGVRVDQLQAQLSNQGREMEKLVQGVQDKTEQLEHLKEENGQLFLSLTEQREHQKKLEQTVEEMKQKETTAAKKQQELTDQNMDLSKRLSENMIIHDVLQREKEKMEKENDYLKRENNRLLSYMGLDCDSLSYQVPTSNQGGTRQDPGLVFGNPYSGIQESSAPSLLSIKKCPTCKSDFAADVFDHNLALEQHLQTLSLNCPICDKTFPAKEKQIFEDHVFCHTL</sequence>
<organism>
    <name type="scientific">Bos taurus</name>
    <name type="common">Bovine</name>
    <dbReference type="NCBI Taxonomy" id="9913"/>
    <lineage>
        <taxon>Eukaryota</taxon>
        <taxon>Metazoa</taxon>
        <taxon>Chordata</taxon>
        <taxon>Craniata</taxon>
        <taxon>Vertebrata</taxon>
        <taxon>Euteleostomi</taxon>
        <taxon>Mammalia</taxon>
        <taxon>Eutheria</taxon>
        <taxon>Laurasiatheria</taxon>
        <taxon>Artiodactyla</taxon>
        <taxon>Ruminantia</taxon>
        <taxon>Pecora</taxon>
        <taxon>Bovidae</taxon>
        <taxon>Bovinae</taxon>
        <taxon>Bos</taxon>
    </lineage>
</organism>
<gene>
    <name evidence="1" type="primary">CALCOCO2</name>
    <name evidence="1" type="synonym">NDP52</name>
</gene>
<protein>
    <recommendedName>
        <fullName evidence="1">Calcium-binding and coiled-coil domain-containing protein 2</fullName>
    </recommendedName>
    <alternativeName>
        <fullName evidence="1">Antigen nuclear dot 52 kDa protein</fullName>
    </alternativeName>
    <alternativeName>
        <fullName evidence="1">Nuclear domain 10 protein NDP52</fullName>
        <shortName evidence="1">Nuclear domain 10 protein 52</shortName>
    </alternativeName>
    <alternativeName>
        <fullName evidence="1">Nuclear dot protein 52</fullName>
    </alternativeName>
</protein>